<reference key="1">
    <citation type="journal article" date="1994" name="Genomics">
        <title>Structure and diversity of the murine cryptdin gene family.</title>
        <authorList>
            <person name="Huttner K.M."/>
            <person name="Selsted M.E."/>
            <person name="Ouellette A.J."/>
        </authorList>
    </citation>
    <scope>NUCLEOTIDE SEQUENCE [GENOMIC DNA / MRNA]</scope>
    <source>
        <strain>129</strain>
        <tissue>Small intestine</tissue>
    </source>
</reference>
<reference key="2">
    <citation type="journal article" date="2004" name="Genome Res.">
        <title>The status, quality, and expansion of the NIH full-length cDNA project: the Mammalian Gene Collection (MGC).</title>
        <authorList>
            <consortium name="The MGC Project Team"/>
        </authorList>
    </citation>
    <scope>NUCLEOTIDE SEQUENCE [LARGE SCALE MRNA] OF 3-93</scope>
</reference>
<reference key="3">
    <citation type="journal article" date="1992" name="J. Cell Biol.">
        <title>Enteric defensins: antibiotic peptide components of intestinal host defense.</title>
        <authorList>
            <person name="Selsted M.E."/>
            <person name="Miller S.I."/>
            <person name="Henschen A.H."/>
            <person name="Ouellette A.J."/>
        </authorList>
    </citation>
    <scope>PROTEIN SEQUENCE OF 59-93</scope>
    <source>
        <strain>SWR/J</strain>
        <tissue>Small intestine</tissue>
    </source>
</reference>
<protein>
    <recommendedName>
        <fullName>Alpha-defensin 3</fullName>
    </recommendedName>
    <alternativeName>
        <fullName>Defensin-related cryptdin-3</fullName>
    </alternativeName>
</protein>
<proteinExistence type="evidence at protein level"/>
<sequence>MKTLVLLSALVLLAFQVQADPIQNTDEETKTEEQPGEDDQAVSVSFGDPEGSSLQEESLRDLVCYCRKRGCKRRERMNGTCRKGHLMYTLCCR</sequence>
<organism>
    <name type="scientific">Mus musculus</name>
    <name type="common">Mouse</name>
    <dbReference type="NCBI Taxonomy" id="10090"/>
    <lineage>
        <taxon>Eukaryota</taxon>
        <taxon>Metazoa</taxon>
        <taxon>Chordata</taxon>
        <taxon>Craniata</taxon>
        <taxon>Vertebrata</taxon>
        <taxon>Euteleostomi</taxon>
        <taxon>Mammalia</taxon>
        <taxon>Eutheria</taxon>
        <taxon>Euarchontoglires</taxon>
        <taxon>Glires</taxon>
        <taxon>Rodentia</taxon>
        <taxon>Myomorpha</taxon>
        <taxon>Muroidea</taxon>
        <taxon>Muridae</taxon>
        <taxon>Murinae</taxon>
        <taxon>Mus</taxon>
        <taxon>Mus</taxon>
    </lineage>
</organism>
<gene>
    <name type="primary">Defa3</name>
    <name type="synonym">Defcr3</name>
</gene>
<name>DEFA3_MOUSE</name>
<dbReference type="EMBL" id="U12559">
    <property type="protein sequence ID" value="AAA20972.1"/>
    <property type="molecule type" value="Genomic_DNA"/>
</dbReference>
<dbReference type="EMBL" id="U02999">
    <property type="protein sequence ID" value="AAB60677.1"/>
    <property type="molecule type" value="Genomic_DNA"/>
</dbReference>
<dbReference type="EMBL" id="U02998">
    <property type="protein sequence ID" value="AAB60677.1"/>
    <property type="status" value="JOINED"/>
    <property type="molecule type" value="Genomic_DNA"/>
</dbReference>
<dbReference type="EMBL" id="U03030">
    <property type="protein sequence ID" value="AAA57171.1"/>
    <property type="molecule type" value="mRNA"/>
</dbReference>
<dbReference type="EMBL" id="BC099855">
    <property type="protein sequence ID" value="AAH99855.1"/>
    <property type="molecule type" value="mRNA"/>
</dbReference>
<dbReference type="CCDS" id="CCDS40270.1"/>
<dbReference type="PIR" id="I49102">
    <property type="entry name" value="I49102"/>
</dbReference>
<dbReference type="RefSeq" id="NP_001161262.1">
    <property type="nucleotide sequence ID" value="NM_001167790.1"/>
</dbReference>
<dbReference type="RefSeq" id="NP_031876.1">
    <property type="nucleotide sequence ID" value="NM_007850.2"/>
</dbReference>
<dbReference type="SMR" id="P28310"/>
<dbReference type="FunCoup" id="P28310">
    <property type="interactions" value="42"/>
</dbReference>
<dbReference type="STRING" id="10090.ENSMUSP00000078485"/>
<dbReference type="iPTMnet" id="P28310"/>
<dbReference type="PhosphoSitePlus" id="P28310"/>
<dbReference type="PaxDb" id="10090-ENSMUSP00000078485"/>
<dbReference type="PeptideAtlas" id="P28310"/>
<dbReference type="DNASU" id="13237"/>
<dbReference type="Ensembl" id="ENSMUST00000079528.6">
    <property type="protein sequence ID" value="ENSMUSP00000078485.6"/>
    <property type="gene ID" value="ENSMUSG00000060208.6"/>
</dbReference>
<dbReference type="Ensembl" id="ENSMUST00000098893.4">
    <property type="protein sequence ID" value="ENSMUSP00000096492.4"/>
    <property type="gene ID" value="ENSMUSG00000074440.4"/>
</dbReference>
<dbReference type="GeneID" id="13237"/>
<dbReference type="GeneID" id="23855"/>
<dbReference type="KEGG" id="mmu:13237"/>
<dbReference type="KEGG" id="mmu:23855"/>
<dbReference type="UCSC" id="uc009lbn.2">
    <property type="organism name" value="mouse"/>
</dbReference>
<dbReference type="AGR" id="MGI:94883"/>
<dbReference type="CTD" id="1668"/>
<dbReference type="CTD" id="23855"/>
<dbReference type="MGI" id="MGI:94883">
    <property type="gene designation" value="Defa3"/>
</dbReference>
<dbReference type="VEuPathDB" id="HostDB:ENSMUSG00000060208"/>
<dbReference type="VEuPathDB" id="HostDB:ENSMUSG00000074440"/>
<dbReference type="eggNOG" id="ENOG502T2EX">
    <property type="taxonomic scope" value="Eukaryota"/>
</dbReference>
<dbReference type="GeneTree" id="ENSGT00940000153268"/>
<dbReference type="HOGENOM" id="CLU_160803_1_0_1"/>
<dbReference type="InParanoid" id="P28310"/>
<dbReference type="OMA" id="CHLGERH"/>
<dbReference type="OrthoDB" id="9625549at2759"/>
<dbReference type="PhylomeDB" id="P28310"/>
<dbReference type="TreeFam" id="TF338414"/>
<dbReference type="Reactome" id="R-MMU-1461973">
    <property type="pathway name" value="Defensins"/>
</dbReference>
<dbReference type="Reactome" id="R-MMU-1462054">
    <property type="pathway name" value="Alpha-defensins"/>
</dbReference>
<dbReference type="Reactome" id="R-MMU-6798695">
    <property type="pathway name" value="Neutrophil degranulation"/>
</dbReference>
<dbReference type="BioGRID-ORCS" id="13237">
    <property type="hits" value="4 hits in 13 CRISPR screens"/>
</dbReference>
<dbReference type="BioGRID-ORCS" id="23855">
    <property type="hits" value="1 hit in 14 CRISPR screens"/>
</dbReference>
<dbReference type="PRO" id="PR:P28310"/>
<dbReference type="Proteomes" id="UP000000589">
    <property type="component" value="Chromosome 8"/>
</dbReference>
<dbReference type="RNAct" id="P28310">
    <property type="molecule type" value="protein"/>
</dbReference>
<dbReference type="Bgee" id="ENSMUSG00000060208">
    <property type="expression patterns" value="Expressed in ileum and 16 other cell types or tissues"/>
</dbReference>
<dbReference type="GO" id="GO:0005615">
    <property type="term" value="C:extracellular space"/>
    <property type="evidence" value="ECO:0000314"/>
    <property type="project" value="MGI"/>
</dbReference>
<dbReference type="GO" id="GO:0071222">
    <property type="term" value="P:cellular response to lipopolysaccharide"/>
    <property type="evidence" value="ECO:0000316"/>
    <property type="project" value="MGI"/>
</dbReference>
<dbReference type="GO" id="GO:0042742">
    <property type="term" value="P:defense response to bacterium"/>
    <property type="evidence" value="ECO:0000314"/>
    <property type="project" value="MGI"/>
</dbReference>
<dbReference type="GO" id="GO:0050829">
    <property type="term" value="P:defense response to Gram-negative bacterium"/>
    <property type="evidence" value="ECO:0000316"/>
    <property type="project" value="MGI"/>
</dbReference>
<dbReference type="GO" id="GO:0050830">
    <property type="term" value="P:defense response to Gram-positive bacterium"/>
    <property type="evidence" value="ECO:0000316"/>
    <property type="project" value="MGI"/>
</dbReference>
<dbReference type="GO" id="GO:0009410">
    <property type="term" value="P:response to xenobiotic stimulus"/>
    <property type="evidence" value="ECO:0000314"/>
    <property type="project" value="MGI"/>
</dbReference>
<dbReference type="InterPro" id="IPR016327">
    <property type="entry name" value="Alpha-defensin"/>
</dbReference>
<dbReference type="InterPro" id="IPR006081">
    <property type="entry name" value="Alpha-defensin_C"/>
</dbReference>
<dbReference type="InterPro" id="IPR002366">
    <property type="entry name" value="Alpha-defensin_N"/>
</dbReference>
<dbReference type="InterPro" id="IPR006080">
    <property type="entry name" value="Beta/alpha-defensin_C"/>
</dbReference>
<dbReference type="PANTHER" id="PTHR11876">
    <property type="entry name" value="ALPHA-DEFENSIN 1"/>
    <property type="match status" value="1"/>
</dbReference>
<dbReference type="PANTHER" id="PTHR11876:SF2">
    <property type="entry name" value="ALPHA-DEFENSIN 1-RELATED"/>
    <property type="match status" value="1"/>
</dbReference>
<dbReference type="Pfam" id="PF00323">
    <property type="entry name" value="Defensin_1"/>
    <property type="match status" value="1"/>
</dbReference>
<dbReference type="Pfam" id="PF00879">
    <property type="entry name" value="Defensin_propep"/>
    <property type="match status" value="1"/>
</dbReference>
<dbReference type="PIRSF" id="PIRSF001875">
    <property type="entry name" value="Alpha-defensin"/>
    <property type="match status" value="1"/>
</dbReference>
<dbReference type="SMART" id="SM01418">
    <property type="entry name" value="Defensin_propep"/>
    <property type="match status" value="1"/>
</dbReference>
<dbReference type="SMART" id="SM00048">
    <property type="entry name" value="DEFSN"/>
    <property type="match status" value="1"/>
</dbReference>
<dbReference type="SUPFAM" id="SSF57392">
    <property type="entry name" value="Defensin-like"/>
    <property type="match status" value="1"/>
</dbReference>
<dbReference type="PROSITE" id="PS00269">
    <property type="entry name" value="DEFENSIN"/>
    <property type="match status" value="1"/>
</dbReference>
<evidence type="ECO:0000250" key="1"/>
<evidence type="ECO:0000255" key="2"/>
<evidence type="ECO:0000256" key="3">
    <source>
        <dbReference type="SAM" id="MobiDB-lite"/>
    </source>
</evidence>
<evidence type="ECO:0000269" key="4">
    <source>
    </source>
</evidence>
<evidence type="ECO:0000305" key="5"/>
<keyword id="KW-0044">Antibiotic</keyword>
<keyword id="KW-0929">Antimicrobial</keyword>
<keyword id="KW-0211">Defensin</keyword>
<keyword id="KW-0903">Direct protein sequencing</keyword>
<keyword id="KW-1015">Disulfide bond</keyword>
<keyword id="KW-1185">Reference proteome</keyword>
<keyword id="KW-0964">Secreted</keyword>
<keyword id="KW-0732">Signal</keyword>
<comment type="function">
    <text>Probably contributes to the antimicrobial barrier function of the small bowel mucosa.</text>
</comment>
<comment type="subcellular location">
    <subcellularLocation>
        <location>Secreted</location>
    </subcellularLocation>
</comment>
<comment type="tissue specificity">
    <text>Paneth cells of the small bowel.</text>
</comment>
<comment type="similarity">
    <text evidence="5">Belongs to the alpha-defensin family.</text>
</comment>
<feature type="signal peptide" evidence="2">
    <location>
        <begin position="1"/>
        <end position="16"/>
    </location>
</feature>
<feature type="propeptide" id="PRO_0000006821" evidence="4">
    <location>
        <begin position="17"/>
        <end position="58"/>
    </location>
</feature>
<feature type="peptide" id="PRO_0000006822" description="Alpha-defensin 3">
    <location>
        <begin position="59"/>
        <end position="93"/>
    </location>
</feature>
<feature type="region of interest" description="Disordered" evidence="3">
    <location>
        <begin position="22"/>
        <end position="56"/>
    </location>
</feature>
<feature type="disulfide bond" evidence="1">
    <location>
        <begin position="64"/>
        <end position="92"/>
    </location>
</feature>
<feature type="disulfide bond" evidence="1">
    <location>
        <begin position="66"/>
        <end position="81"/>
    </location>
</feature>
<feature type="disulfide bond" evidence="1">
    <location>
        <begin position="71"/>
        <end position="91"/>
    </location>
</feature>
<accession>P28310</accession>
<accession>Q499K7</accession>